<comment type="function">
    <text evidence="1">Provides the (R)-glutamate required for cell wall biosynthesis.</text>
</comment>
<comment type="catalytic activity">
    <reaction evidence="1">
        <text>L-glutamate = D-glutamate</text>
        <dbReference type="Rhea" id="RHEA:12813"/>
        <dbReference type="ChEBI" id="CHEBI:29985"/>
        <dbReference type="ChEBI" id="CHEBI:29986"/>
        <dbReference type="EC" id="5.1.1.3"/>
    </reaction>
</comment>
<comment type="pathway">
    <text evidence="1">Cell wall biogenesis; peptidoglycan biosynthesis.</text>
</comment>
<comment type="similarity">
    <text evidence="1">Belongs to the aspartate/glutamate racemases family.</text>
</comment>
<name>MURI_MYCTU</name>
<feature type="chain" id="PRO_0000095489" description="Glutamate racemase">
    <location>
        <begin position="1"/>
        <end position="271"/>
    </location>
</feature>
<feature type="active site" description="Proton donor/acceptor" evidence="1">
    <location>
        <position position="75"/>
    </location>
</feature>
<feature type="active site" description="Proton donor/acceptor" evidence="1">
    <location>
        <position position="185"/>
    </location>
</feature>
<feature type="binding site" evidence="1">
    <location>
        <begin position="12"/>
        <end position="13"/>
    </location>
    <ligand>
        <name>substrate</name>
    </ligand>
</feature>
<feature type="binding site" evidence="1">
    <location>
        <begin position="44"/>
        <end position="45"/>
    </location>
    <ligand>
        <name>substrate</name>
    </ligand>
</feature>
<feature type="binding site" evidence="1">
    <location>
        <begin position="76"/>
        <end position="77"/>
    </location>
    <ligand>
        <name>substrate</name>
    </ligand>
</feature>
<feature type="binding site" evidence="1">
    <location>
        <begin position="186"/>
        <end position="187"/>
    </location>
    <ligand>
        <name>substrate</name>
    </ligand>
</feature>
<feature type="strand" evidence="2">
    <location>
        <begin position="8"/>
        <end position="15"/>
    </location>
</feature>
<feature type="helix" evidence="2">
    <location>
        <begin position="18"/>
        <end position="27"/>
    </location>
</feature>
<feature type="strand" evidence="2">
    <location>
        <begin position="33"/>
        <end position="37"/>
    </location>
</feature>
<feature type="turn" evidence="2">
    <location>
        <begin position="39"/>
        <end position="41"/>
    </location>
</feature>
<feature type="helix" evidence="2">
    <location>
        <begin position="49"/>
        <end position="65"/>
    </location>
</feature>
<feature type="strand" evidence="2">
    <location>
        <begin position="69"/>
        <end position="73"/>
    </location>
</feature>
<feature type="helix" evidence="2">
    <location>
        <begin position="76"/>
        <end position="89"/>
    </location>
</feature>
<feature type="strand" evidence="2">
    <location>
        <begin position="94"/>
        <end position="98"/>
    </location>
</feature>
<feature type="helix" evidence="2">
    <location>
        <begin position="99"/>
        <end position="108"/>
    </location>
</feature>
<feature type="strand" evidence="2">
    <location>
        <begin position="110"/>
        <end position="118"/>
    </location>
</feature>
<feature type="helix" evidence="2">
    <location>
        <begin position="120"/>
        <end position="124"/>
    </location>
</feature>
<feature type="helix" evidence="2">
    <location>
        <begin position="127"/>
        <end position="131"/>
    </location>
</feature>
<feature type="helix" evidence="2">
    <location>
        <begin position="132"/>
        <end position="134"/>
    </location>
</feature>
<feature type="strand" evidence="2">
    <location>
        <begin position="139"/>
        <end position="144"/>
    </location>
</feature>
<feature type="helix" evidence="2">
    <location>
        <begin position="148"/>
        <end position="153"/>
    </location>
</feature>
<feature type="helix" evidence="2">
    <location>
        <begin position="160"/>
        <end position="175"/>
    </location>
</feature>
<feature type="strand" evidence="2">
    <location>
        <begin position="179"/>
        <end position="183"/>
    </location>
</feature>
<feature type="helix" evidence="2">
    <location>
        <begin position="188"/>
        <end position="191"/>
    </location>
</feature>
<feature type="helix" evidence="2">
    <location>
        <begin position="192"/>
        <end position="199"/>
    </location>
</feature>
<feature type="strand" evidence="2">
    <location>
        <begin position="204"/>
        <end position="207"/>
    </location>
</feature>
<feature type="helix" evidence="2">
    <location>
        <begin position="208"/>
        <end position="222"/>
    </location>
</feature>
<feature type="strand" evidence="2">
    <location>
        <begin position="236"/>
        <end position="242"/>
    </location>
</feature>
<feature type="helix" evidence="2">
    <location>
        <begin position="244"/>
        <end position="254"/>
    </location>
</feature>
<sequence length="271" mass="28643">MNSPLAPVGVFDSGVGGLTVARAIIDQLPDEDIVYVGDTGNGPYGPLTIPEIRAHALAIGDDLVGRGVKALVIACNSASSACLRDARERYQVPVVEVILPAVRRAVAATRNGRIGVIGTRATITSHAYQDAFAAARDTEITAVACPRFVDFVERGVTSGRQVLGLAQGYLEPLQRAEVDTLVLGCTHYPLLSGLIQLAMGENVTLVSSAEETAKEVVRVLTEIDLLRPHDAPPATRIFEATGDPEAFTKLAARFLGPVLGGVQPVHPSRIH</sequence>
<gene>
    <name evidence="1" type="primary">murI</name>
    <name type="ordered locus">Rv1338</name>
    <name type="ORF">MTCY02B10.02</name>
    <name type="ORF">MTCY130.23</name>
</gene>
<proteinExistence type="evidence at protein level"/>
<keyword id="KW-0002">3D-structure</keyword>
<keyword id="KW-0133">Cell shape</keyword>
<keyword id="KW-0961">Cell wall biogenesis/degradation</keyword>
<keyword id="KW-0413">Isomerase</keyword>
<keyword id="KW-0573">Peptidoglycan synthesis</keyword>
<keyword id="KW-1185">Reference proteome</keyword>
<organism>
    <name type="scientific">Mycobacterium tuberculosis (strain ATCC 25618 / H37Rv)</name>
    <dbReference type="NCBI Taxonomy" id="83332"/>
    <lineage>
        <taxon>Bacteria</taxon>
        <taxon>Bacillati</taxon>
        <taxon>Actinomycetota</taxon>
        <taxon>Actinomycetes</taxon>
        <taxon>Mycobacteriales</taxon>
        <taxon>Mycobacteriaceae</taxon>
        <taxon>Mycobacterium</taxon>
        <taxon>Mycobacterium tuberculosis complex</taxon>
    </lineage>
</organism>
<dbReference type="EC" id="5.1.1.3" evidence="1"/>
<dbReference type="EMBL" id="AL123456">
    <property type="protein sequence ID" value="CCP44096.1"/>
    <property type="molecule type" value="Genomic_DNA"/>
</dbReference>
<dbReference type="PIR" id="F70771">
    <property type="entry name" value="F70771"/>
</dbReference>
<dbReference type="RefSeq" id="NP_215854.1">
    <property type="nucleotide sequence ID" value="NC_000962.3"/>
</dbReference>
<dbReference type="RefSeq" id="WP_003406919.1">
    <property type="nucleotide sequence ID" value="NZ_NVQJ01000031.1"/>
</dbReference>
<dbReference type="PDB" id="5HJ7">
    <property type="method" value="X-ray"/>
    <property type="resolution" value="2.30 A"/>
    <property type="chains" value="A/B=1-271"/>
</dbReference>
<dbReference type="PDBsum" id="5HJ7"/>
<dbReference type="SMR" id="P9WPW9"/>
<dbReference type="FunCoup" id="P9WPW9">
    <property type="interactions" value="32"/>
</dbReference>
<dbReference type="STRING" id="83332.Rv1338"/>
<dbReference type="ChEMBL" id="CHEMBL4295588"/>
<dbReference type="MoonProt" id="P9WPW9"/>
<dbReference type="PaxDb" id="83332-Rv1338"/>
<dbReference type="DNASU" id="886866"/>
<dbReference type="GeneID" id="886866"/>
<dbReference type="KEGG" id="mtu:Rv1338"/>
<dbReference type="KEGG" id="mtv:RVBD_1338"/>
<dbReference type="TubercuList" id="Rv1338"/>
<dbReference type="eggNOG" id="COG0796">
    <property type="taxonomic scope" value="Bacteria"/>
</dbReference>
<dbReference type="InParanoid" id="P9WPW9"/>
<dbReference type="OrthoDB" id="9801055at2"/>
<dbReference type="PhylomeDB" id="P9WPW9"/>
<dbReference type="BioCyc" id="MetaCyc:G185E-5517-MONOMER"/>
<dbReference type="BRENDA" id="5.1.1.1">
    <property type="organism ID" value="3445"/>
</dbReference>
<dbReference type="BRENDA" id="5.1.1.3">
    <property type="organism ID" value="3445"/>
</dbReference>
<dbReference type="UniPathway" id="UPA00219"/>
<dbReference type="Proteomes" id="UP000001584">
    <property type="component" value="Chromosome"/>
</dbReference>
<dbReference type="GO" id="GO:0005886">
    <property type="term" value="C:plasma membrane"/>
    <property type="evidence" value="ECO:0007005"/>
    <property type="project" value="MTBBASE"/>
</dbReference>
<dbReference type="GO" id="GO:0008657">
    <property type="term" value="F:DNA topoisomerase type II (double strand cut, ATP-hydrolyzing) inhibitor activity"/>
    <property type="evidence" value="ECO:0000314"/>
    <property type="project" value="MTBBASE"/>
</dbReference>
<dbReference type="GO" id="GO:0008881">
    <property type="term" value="F:glutamate racemase activity"/>
    <property type="evidence" value="ECO:0000314"/>
    <property type="project" value="MTBBASE"/>
</dbReference>
<dbReference type="GO" id="GO:0071555">
    <property type="term" value="P:cell wall organization"/>
    <property type="evidence" value="ECO:0007669"/>
    <property type="project" value="UniProtKB-KW"/>
</dbReference>
<dbReference type="GO" id="GO:0009252">
    <property type="term" value="P:peptidoglycan biosynthetic process"/>
    <property type="evidence" value="ECO:0000314"/>
    <property type="project" value="MTBBASE"/>
</dbReference>
<dbReference type="GO" id="GO:0008360">
    <property type="term" value="P:regulation of cell shape"/>
    <property type="evidence" value="ECO:0007669"/>
    <property type="project" value="UniProtKB-KW"/>
</dbReference>
<dbReference type="FunFam" id="3.40.50.1860:FF:000001">
    <property type="entry name" value="Glutamate racemase"/>
    <property type="match status" value="1"/>
</dbReference>
<dbReference type="Gene3D" id="3.40.50.1860">
    <property type="match status" value="2"/>
</dbReference>
<dbReference type="HAMAP" id="MF_00258">
    <property type="entry name" value="Glu_racemase"/>
    <property type="match status" value="1"/>
</dbReference>
<dbReference type="InterPro" id="IPR015942">
    <property type="entry name" value="Asp/Glu/hydantoin_racemase"/>
</dbReference>
<dbReference type="InterPro" id="IPR001920">
    <property type="entry name" value="Asp/Glu_race"/>
</dbReference>
<dbReference type="InterPro" id="IPR018187">
    <property type="entry name" value="Asp/Glu_racemase_AS_1"/>
</dbReference>
<dbReference type="InterPro" id="IPR033134">
    <property type="entry name" value="Asp/Glu_racemase_AS_2"/>
</dbReference>
<dbReference type="InterPro" id="IPR004391">
    <property type="entry name" value="Glu_race"/>
</dbReference>
<dbReference type="NCBIfam" id="TIGR00067">
    <property type="entry name" value="glut_race"/>
    <property type="match status" value="1"/>
</dbReference>
<dbReference type="PANTHER" id="PTHR21198">
    <property type="entry name" value="GLUTAMATE RACEMASE"/>
    <property type="match status" value="1"/>
</dbReference>
<dbReference type="PANTHER" id="PTHR21198:SF2">
    <property type="entry name" value="GLUTAMATE RACEMASE"/>
    <property type="match status" value="1"/>
</dbReference>
<dbReference type="Pfam" id="PF01177">
    <property type="entry name" value="Asp_Glu_race"/>
    <property type="match status" value="1"/>
</dbReference>
<dbReference type="SUPFAM" id="SSF53681">
    <property type="entry name" value="Aspartate/glutamate racemase"/>
    <property type="match status" value="2"/>
</dbReference>
<dbReference type="PROSITE" id="PS00923">
    <property type="entry name" value="ASP_GLU_RACEMASE_1"/>
    <property type="match status" value="1"/>
</dbReference>
<dbReference type="PROSITE" id="PS00924">
    <property type="entry name" value="ASP_GLU_RACEMASE_2"/>
    <property type="match status" value="1"/>
</dbReference>
<reference key="1">
    <citation type="journal article" date="1998" name="Nature">
        <title>Deciphering the biology of Mycobacterium tuberculosis from the complete genome sequence.</title>
        <authorList>
            <person name="Cole S.T."/>
            <person name="Brosch R."/>
            <person name="Parkhill J."/>
            <person name="Garnier T."/>
            <person name="Churcher C.M."/>
            <person name="Harris D.E."/>
            <person name="Gordon S.V."/>
            <person name="Eiglmeier K."/>
            <person name="Gas S."/>
            <person name="Barry C.E. III"/>
            <person name="Tekaia F."/>
            <person name="Badcock K."/>
            <person name="Basham D."/>
            <person name="Brown D."/>
            <person name="Chillingworth T."/>
            <person name="Connor R."/>
            <person name="Davies R.M."/>
            <person name="Devlin K."/>
            <person name="Feltwell T."/>
            <person name="Gentles S."/>
            <person name="Hamlin N."/>
            <person name="Holroyd S."/>
            <person name="Hornsby T."/>
            <person name="Jagels K."/>
            <person name="Krogh A."/>
            <person name="McLean J."/>
            <person name="Moule S."/>
            <person name="Murphy L.D."/>
            <person name="Oliver S."/>
            <person name="Osborne J."/>
            <person name="Quail M.A."/>
            <person name="Rajandream M.A."/>
            <person name="Rogers J."/>
            <person name="Rutter S."/>
            <person name="Seeger K."/>
            <person name="Skelton S."/>
            <person name="Squares S."/>
            <person name="Squares R."/>
            <person name="Sulston J.E."/>
            <person name="Taylor K."/>
            <person name="Whitehead S."/>
            <person name="Barrell B.G."/>
        </authorList>
    </citation>
    <scope>NUCLEOTIDE SEQUENCE [LARGE SCALE GENOMIC DNA]</scope>
    <source>
        <strain>ATCC 25618 / H37Rv</strain>
    </source>
</reference>
<reference key="2">
    <citation type="journal article" date="2011" name="Mol. Cell. Proteomics">
        <title>Proteogenomic analysis of Mycobacterium tuberculosis by high resolution mass spectrometry.</title>
        <authorList>
            <person name="Kelkar D.S."/>
            <person name="Kumar D."/>
            <person name="Kumar P."/>
            <person name="Balakrishnan L."/>
            <person name="Muthusamy B."/>
            <person name="Yadav A.K."/>
            <person name="Shrivastava P."/>
            <person name="Marimuthu A."/>
            <person name="Anand S."/>
            <person name="Sundaram H."/>
            <person name="Kingsbury R."/>
            <person name="Harsha H.C."/>
            <person name="Nair B."/>
            <person name="Prasad T.S."/>
            <person name="Chauhan D.S."/>
            <person name="Katoch K."/>
            <person name="Katoch V.M."/>
            <person name="Kumar P."/>
            <person name="Chaerkady R."/>
            <person name="Ramachandran S."/>
            <person name="Dash D."/>
            <person name="Pandey A."/>
        </authorList>
    </citation>
    <scope>IDENTIFICATION BY MASS SPECTROMETRY [LARGE SCALE ANALYSIS]</scope>
    <source>
        <strain>ATCC 25618 / H37Rv</strain>
    </source>
</reference>
<protein>
    <recommendedName>
        <fullName evidence="1">Glutamate racemase</fullName>
        <ecNumber evidence="1">5.1.1.3</ecNumber>
    </recommendedName>
</protein>
<accession>P9WPW9</accession>
<accession>L0T6C6</accession>
<accession>P63635</accession>
<accession>Q10626</accession>
<evidence type="ECO:0000255" key="1">
    <source>
        <dbReference type="HAMAP-Rule" id="MF_00258"/>
    </source>
</evidence>
<evidence type="ECO:0007829" key="2">
    <source>
        <dbReference type="PDB" id="5HJ7"/>
    </source>
</evidence>